<evidence type="ECO:0000255" key="1"/>
<evidence type="ECO:0000255" key="2">
    <source>
        <dbReference type="PROSITE-ProRule" id="PRU00686"/>
    </source>
</evidence>
<evidence type="ECO:0000269" key="3">
    <source>
    </source>
</evidence>
<evidence type="ECO:0000269" key="4">
    <source>
    </source>
</evidence>
<evidence type="ECO:0000305" key="5"/>
<evidence type="ECO:0007829" key="6">
    <source>
        <dbReference type="PDB" id="3L4N"/>
    </source>
</evidence>
<sequence length="231" mass="25783">MIPSNKRNARILSITTLLLLLVFFVAQNANFLTVEIKEETSKAFSTNMDNMAGGSSREYAAMPTSTTNKGSSEVDEEINEIKQKVGLQQPIASVDDSLSAIKNDKGSRITKAFNVQKEYSLILDLSPIIIFSKSTCSYSKGMKELLENEYQFIPNYYIIELDKHGHGEELQEYIKLVTGRGTVPNLLVNGVSRGGNEEIKKLHTQGKLLESLQVWSDGKFSVEQREKPSNN</sequence>
<organism>
    <name type="scientific">Saccharomyces cerevisiae (strain ATCC 204508 / S288c)</name>
    <name type="common">Baker's yeast</name>
    <dbReference type="NCBI Taxonomy" id="559292"/>
    <lineage>
        <taxon>Eukaryota</taxon>
        <taxon>Fungi</taxon>
        <taxon>Dikarya</taxon>
        <taxon>Ascomycota</taxon>
        <taxon>Saccharomycotina</taxon>
        <taxon>Saccharomycetes</taxon>
        <taxon>Saccharomycetales</taxon>
        <taxon>Saccharomycetaceae</taxon>
        <taxon>Saccharomyces</taxon>
    </lineage>
</organism>
<feature type="signal peptide" evidence="1">
    <location>
        <begin position="1"/>
        <end position="29"/>
    </location>
</feature>
<feature type="chain" id="PRO_0000042988" description="Monothiol glutaredoxin-6">
    <location>
        <begin position="30"/>
        <end position="231"/>
    </location>
</feature>
<feature type="domain" description="Glutaredoxin" evidence="2">
    <location>
        <begin position="116"/>
        <end position="219"/>
    </location>
</feature>
<feature type="binding site" evidence="1">
    <location>
        <position position="136"/>
    </location>
    <ligand>
        <name>[2Fe-2S] cluster</name>
        <dbReference type="ChEBI" id="CHEBI:190135"/>
        <note>ligand shared between dimeric partners</note>
    </ligand>
</feature>
<feature type="helix" evidence="6">
    <location>
        <begin position="115"/>
        <end position="123"/>
    </location>
</feature>
<feature type="strand" evidence="6">
    <location>
        <begin position="127"/>
        <end position="132"/>
    </location>
</feature>
<feature type="helix" evidence="6">
    <location>
        <begin position="137"/>
        <end position="149"/>
    </location>
</feature>
<feature type="strand" evidence="6">
    <location>
        <begin position="150"/>
        <end position="154"/>
    </location>
</feature>
<feature type="strand" evidence="6">
    <location>
        <begin position="157"/>
        <end position="160"/>
    </location>
</feature>
<feature type="helix" evidence="6">
    <location>
        <begin position="161"/>
        <end position="163"/>
    </location>
</feature>
<feature type="helix" evidence="6">
    <location>
        <begin position="167"/>
        <end position="178"/>
    </location>
</feature>
<feature type="strand" evidence="6">
    <location>
        <begin position="185"/>
        <end position="188"/>
    </location>
</feature>
<feature type="helix" evidence="6">
    <location>
        <begin position="196"/>
        <end position="204"/>
    </location>
</feature>
<feature type="helix" evidence="6">
    <location>
        <begin position="208"/>
        <end position="214"/>
    </location>
</feature>
<feature type="strand" evidence="6">
    <location>
        <begin position="221"/>
        <end position="224"/>
    </location>
</feature>
<gene>
    <name type="primary">GRX6</name>
    <name type="ordered locus">YDL010W</name>
    <name type="ORF">D2890</name>
</gene>
<reference key="1">
    <citation type="journal article" date="1997" name="Nature">
        <title>The nucleotide sequence of Saccharomyces cerevisiae chromosome IV.</title>
        <authorList>
            <person name="Jacq C."/>
            <person name="Alt-Moerbe J."/>
            <person name="Andre B."/>
            <person name="Arnold W."/>
            <person name="Bahr A."/>
            <person name="Ballesta J.P.G."/>
            <person name="Bargues M."/>
            <person name="Baron L."/>
            <person name="Becker A."/>
            <person name="Biteau N."/>
            <person name="Bloecker H."/>
            <person name="Blugeon C."/>
            <person name="Boskovic J."/>
            <person name="Brandt P."/>
            <person name="Brueckner M."/>
            <person name="Buitrago M.J."/>
            <person name="Coster F."/>
            <person name="Delaveau T."/>
            <person name="del Rey F."/>
            <person name="Dujon B."/>
            <person name="Eide L.G."/>
            <person name="Garcia-Cantalejo J.M."/>
            <person name="Goffeau A."/>
            <person name="Gomez-Peris A."/>
            <person name="Granotier C."/>
            <person name="Hanemann V."/>
            <person name="Hankeln T."/>
            <person name="Hoheisel J.D."/>
            <person name="Jaeger W."/>
            <person name="Jimenez A."/>
            <person name="Jonniaux J.-L."/>
            <person name="Kraemer C."/>
            <person name="Kuester H."/>
            <person name="Laamanen P."/>
            <person name="Legros Y."/>
            <person name="Louis E.J."/>
            <person name="Moeller-Rieker S."/>
            <person name="Monnet A."/>
            <person name="Moro M."/>
            <person name="Mueller-Auer S."/>
            <person name="Nussbaumer B."/>
            <person name="Paricio N."/>
            <person name="Paulin L."/>
            <person name="Perea J."/>
            <person name="Perez-Alonso M."/>
            <person name="Perez-Ortin J.E."/>
            <person name="Pohl T.M."/>
            <person name="Prydz H."/>
            <person name="Purnelle B."/>
            <person name="Rasmussen S.W."/>
            <person name="Remacha M.A."/>
            <person name="Revuelta J.L."/>
            <person name="Rieger M."/>
            <person name="Salom D."/>
            <person name="Saluz H.P."/>
            <person name="Saiz J.E."/>
            <person name="Saren A.-M."/>
            <person name="Schaefer M."/>
            <person name="Scharfe M."/>
            <person name="Schmidt E.R."/>
            <person name="Schneider C."/>
            <person name="Scholler P."/>
            <person name="Schwarz S."/>
            <person name="Soler-Mira A."/>
            <person name="Urrestarazu L.A."/>
            <person name="Verhasselt P."/>
            <person name="Vissers S."/>
            <person name="Voet M."/>
            <person name="Volckaert G."/>
            <person name="Wagner G."/>
            <person name="Wambutt R."/>
            <person name="Wedler E."/>
            <person name="Wedler H."/>
            <person name="Woelfl S."/>
            <person name="Harris D.E."/>
            <person name="Bowman S."/>
            <person name="Brown D."/>
            <person name="Churcher C.M."/>
            <person name="Connor R."/>
            <person name="Dedman K."/>
            <person name="Gentles S."/>
            <person name="Hamlin N."/>
            <person name="Hunt S."/>
            <person name="Jones L."/>
            <person name="McDonald S."/>
            <person name="Murphy L.D."/>
            <person name="Niblett D."/>
            <person name="Odell C."/>
            <person name="Oliver K."/>
            <person name="Rajandream M.A."/>
            <person name="Richards C."/>
            <person name="Shore L."/>
            <person name="Walsh S.V."/>
            <person name="Barrell B.G."/>
            <person name="Dietrich F.S."/>
            <person name="Mulligan J.T."/>
            <person name="Allen E."/>
            <person name="Araujo R."/>
            <person name="Aviles E."/>
            <person name="Berno A."/>
            <person name="Carpenter J."/>
            <person name="Chen E."/>
            <person name="Cherry J.M."/>
            <person name="Chung E."/>
            <person name="Duncan M."/>
            <person name="Hunicke-Smith S."/>
            <person name="Hyman R.W."/>
            <person name="Komp C."/>
            <person name="Lashkari D."/>
            <person name="Lew H."/>
            <person name="Lin D."/>
            <person name="Mosedale D."/>
            <person name="Nakahara K."/>
            <person name="Namath A."/>
            <person name="Oefner P."/>
            <person name="Oh C."/>
            <person name="Petel F.X."/>
            <person name="Roberts D."/>
            <person name="Schramm S."/>
            <person name="Schroeder M."/>
            <person name="Shogren T."/>
            <person name="Shroff N."/>
            <person name="Winant A."/>
            <person name="Yelton M.A."/>
            <person name="Botstein D."/>
            <person name="Davis R.W."/>
            <person name="Johnston M."/>
            <person name="Andrews S."/>
            <person name="Brinkman R."/>
            <person name="Cooper J."/>
            <person name="Ding H."/>
            <person name="Du Z."/>
            <person name="Favello A."/>
            <person name="Fulton L."/>
            <person name="Gattung S."/>
            <person name="Greco T."/>
            <person name="Hallsworth K."/>
            <person name="Hawkins J."/>
            <person name="Hillier L.W."/>
            <person name="Jier M."/>
            <person name="Johnson D."/>
            <person name="Johnston L."/>
            <person name="Kirsten J."/>
            <person name="Kucaba T."/>
            <person name="Langston Y."/>
            <person name="Latreille P."/>
            <person name="Le T."/>
            <person name="Mardis E."/>
            <person name="Menezes S."/>
            <person name="Miller N."/>
            <person name="Nhan M."/>
            <person name="Pauley A."/>
            <person name="Peluso D."/>
            <person name="Rifkin L."/>
            <person name="Riles L."/>
            <person name="Taich A."/>
            <person name="Trevaskis E."/>
            <person name="Vignati D."/>
            <person name="Wilcox L."/>
            <person name="Wohldman P."/>
            <person name="Vaudin M."/>
            <person name="Wilson R."/>
            <person name="Waterston R."/>
            <person name="Albermann K."/>
            <person name="Hani J."/>
            <person name="Heumann K."/>
            <person name="Kleine K."/>
            <person name="Mewes H.-W."/>
            <person name="Zollner A."/>
            <person name="Zaccaria P."/>
        </authorList>
    </citation>
    <scope>NUCLEOTIDE SEQUENCE [LARGE SCALE GENOMIC DNA]</scope>
    <source>
        <strain>ATCC 204508 / S288c</strain>
    </source>
</reference>
<reference key="2">
    <citation type="journal article" date="2014" name="G3 (Bethesda)">
        <title>The reference genome sequence of Saccharomyces cerevisiae: Then and now.</title>
        <authorList>
            <person name="Engel S.R."/>
            <person name="Dietrich F.S."/>
            <person name="Fisk D.G."/>
            <person name="Binkley G."/>
            <person name="Balakrishnan R."/>
            <person name="Costanzo M.C."/>
            <person name="Dwight S.S."/>
            <person name="Hitz B.C."/>
            <person name="Karra K."/>
            <person name="Nash R.S."/>
            <person name="Weng S."/>
            <person name="Wong E.D."/>
            <person name="Lloyd P."/>
            <person name="Skrzypek M.S."/>
            <person name="Miyasato S.R."/>
            <person name="Simison M."/>
            <person name="Cherry J.M."/>
        </authorList>
    </citation>
    <scope>GENOME REANNOTATION</scope>
    <source>
        <strain>ATCC 204508 / S288c</strain>
    </source>
</reference>
<reference key="3">
    <citation type="submission" date="2005-06" db="UniProtKB">
        <authorList>
            <person name="Bienvenut W.V."/>
            <person name="Peters C."/>
        </authorList>
    </citation>
    <scope>PROTEIN SEQUENCE OF 70-82; 85-102; 144-175; 181-193 AND 208-219</scope>
    <scope>IDENTIFICATION BY MASS SPECTROMETRY</scope>
</reference>
<reference key="4">
    <citation type="journal article" date="2003" name="Nature">
        <title>Global analysis of protein localization in budding yeast.</title>
        <authorList>
            <person name="Huh W.-K."/>
            <person name="Falvo J.V."/>
            <person name="Gerke L.C."/>
            <person name="Carroll A.S."/>
            <person name="Howson R.W."/>
            <person name="Weissman J.S."/>
            <person name="O'Shea E.K."/>
        </authorList>
    </citation>
    <scope>SUBCELLULAR LOCATION [LARGE SCALE ANALYSIS]</scope>
</reference>
<reference key="5">
    <citation type="journal article" date="2003" name="Nature">
        <title>Global analysis of protein expression in yeast.</title>
        <authorList>
            <person name="Ghaemmaghami S."/>
            <person name="Huh W.-K."/>
            <person name="Bower K."/>
            <person name="Howson R.W."/>
            <person name="Belle A."/>
            <person name="Dephoure N."/>
            <person name="O'Shea E.K."/>
            <person name="Weissman J.S."/>
        </authorList>
    </citation>
    <scope>LEVEL OF PROTEIN EXPRESSION [LARGE SCALE ANALYSIS]</scope>
</reference>
<reference key="6">
    <citation type="journal article" date="2012" name="Proc. Natl. Acad. Sci. U.S.A.">
        <title>N-terminal acetylome analyses and functional insights of the N-terminal acetyltransferase NatB.</title>
        <authorList>
            <person name="Van Damme P."/>
            <person name="Lasa M."/>
            <person name="Polevoda B."/>
            <person name="Gazquez C."/>
            <person name="Elosegui-Artola A."/>
            <person name="Kim D.S."/>
            <person name="De Juan-Pardo E."/>
            <person name="Demeyer K."/>
            <person name="Hole K."/>
            <person name="Larrea E."/>
            <person name="Timmerman E."/>
            <person name="Prieto J."/>
            <person name="Arnesen T."/>
            <person name="Sherman F."/>
            <person name="Gevaert K."/>
            <person name="Aldabe R."/>
        </authorList>
    </citation>
    <scope>IDENTIFICATION BY MASS SPECTROMETRY [LARGE SCALE ANALYSIS]</scope>
</reference>
<dbReference type="EMBL" id="Z48432">
    <property type="protein sequence ID" value="CAA88349.1"/>
    <property type="molecule type" value="Genomic_DNA"/>
</dbReference>
<dbReference type="EMBL" id="Z74059">
    <property type="protein sequence ID" value="CAA98567.1"/>
    <property type="molecule type" value="Genomic_DNA"/>
</dbReference>
<dbReference type="EMBL" id="BK006938">
    <property type="protein sequence ID" value="DAA11838.1"/>
    <property type="molecule type" value="Genomic_DNA"/>
</dbReference>
<dbReference type="PIR" id="S52509">
    <property type="entry name" value="S52509"/>
</dbReference>
<dbReference type="RefSeq" id="NP_010274.1">
    <property type="nucleotide sequence ID" value="NM_001180069.1"/>
</dbReference>
<dbReference type="PDB" id="3L4N">
    <property type="method" value="X-ray"/>
    <property type="resolution" value="1.50 A"/>
    <property type="chains" value="A=113-231"/>
</dbReference>
<dbReference type="PDB" id="5J3R">
    <property type="method" value="X-ray"/>
    <property type="resolution" value="2.46 A"/>
    <property type="chains" value="A=37-231"/>
</dbReference>
<dbReference type="PDBsum" id="3L4N"/>
<dbReference type="PDBsum" id="5J3R"/>
<dbReference type="SMR" id="Q12438"/>
<dbReference type="BioGRID" id="32043">
    <property type="interactions" value="54"/>
</dbReference>
<dbReference type="ComplexPortal" id="CPX-2841">
    <property type="entry name" value="GRX6 iron-sulfur cluster assembly homodimer complex"/>
</dbReference>
<dbReference type="FunCoup" id="Q12438">
    <property type="interactions" value="35"/>
</dbReference>
<dbReference type="IntAct" id="Q12438">
    <property type="interactions" value="1"/>
</dbReference>
<dbReference type="STRING" id="4932.YDL010W"/>
<dbReference type="iPTMnet" id="Q12438"/>
<dbReference type="PaxDb" id="4932-YDL010W"/>
<dbReference type="PeptideAtlas" id="Q12438"/>
<dbReference type="EnsemblFungi" id="YDL010W_mRNA">
    <property type="protein sequence ID" value="YDL010W"/>
    <property type="gene ID" value="YDL010W"/>
</dbReference>
<dbReference type="GeneID" id="851551"/>
<dbReference type="KEGG" id="sce:YDL010W"/>
<dbReference type="AGR" id="SGD:S000002168"/>
<dbReference type="SGD" id="S000002168">
    <property type="gene designation" value="GRX6"/>
</dbReference>
<dbReference type="VEuPathDB" id="FungiDB:YDL010W"/>
<dbReference type="eggNOG" id="KOG1752">
    <property type="taxonomic scope" value="Eukaryota"/>
</dbReference>
<dbReference type="GeneTree" id="ENSGT00940000176461"/>
<dbReference type="HOGENOM" id="CLU_026126_0_1_1"/>
<dbReference type="InParanoid" id="Q12438"/>
<dbReference type="OMA" id="VAQNANF"/>
<dbReference type="OrthoDB" id="423313at2759"/>
<dbReference type="BioCyc" id="YEAST:G3O-29441-MONOMER"/>
<dbReference type="BioGRID-ORCS" id="851551">
    <property type="hits" value="0 hits in 10 CRISPR screens"/>
</dbReference>
<dbReference type="EvolutionaryTrace" id="Q12438"/>
<dbReference type="PRO" id="PR:Q12438"/>
<dbReference type="Proteomes" id="UP000002311">
    <property type="component" value="Chromosome IV"/>
</dbReference>
<dbReference type="RNAct" id="Q12438">
    <property type="molecule type" value="protein"/>
</dbReference>
<dbReference type="GO" id="GO:0005801">
    <property type="term" value="C:cis-Golgi network"/>
    <property type="evidence" value="ECO:0000314"/>
    <property type="project" value="SGD"/>
</dbReference>
<dbReference type="GO" id="GO:0005737">
    <property type="term" value="C:cytoplasm"/>
    <property type="evidence" value="ECO:0000318"/>
    <property type="project" value="GO_Central"/>
</dbReference>
<dbReference type="GO" id="GO:0005789">
    <property type="term" value="C:endoplasmic reticulum membrane"/>
    <property type="evidence" value="ECO:0000314"/>
    <property type="project" value="SGD"/>
</dbReference>
<dbReference type="GO" id="GO:0000324">
    <property type="term" value="C:fungal-type vacuole"/>
    <property type="evidence" value="ECO:0000314"/>
    <property type="project" value="SGD"/>
</dbReference>
<dbReference type="GO" id="GO:0005794">
    <property type="term" value="C:Golgi apparatus"/>
    <property type="evidence" value="ECO:0000314"/>
    <property type="project" value="SGD"/>
</dbReference>
<dbReference type="GO" id="GO:0005796">
    <property type="term" value="C:Golgi lumen"/>
    <property type="evidence" value="ECO:0000314"/>
    <property type="project" value="SGD"/>
</dbReference>
<dbReference type="GO" id="GO:1990229">
    <property type="term" value="C:iron-sulfur cluster assembly complex"/>
    <property type="evidence" value="ECO:0000353"/>
    <property type="project" value="ComplexPortal"/>
</dbReference>
<dbReference type="GO" id="GO:0016020">
    <property type="term" value="C:membrane"/>
    <property type="evidence" value="ECO:0000314"/>
    <property type="project" value="SGD"/>
</dbReference>
<dbReference type="GO" id="GO:0051537">
    <property type="term" value="F:2 iron, 2 sulfur cluster binding"/>
    <property type="evidence" value="ECO:0000314"/>
    <property type="project" value="SGD"/>
</dbReference>
<dbReference type="GO" id="GO:0015038">
    <property type="term" value="F:glutathione disulfide oxidoreductase activity"/>
    <property type="evidence" value="ECO:0000318"/>
    <property type="project" value="GO_Central"/>
</dbReference>
<dbReference type="GO" id="GO:0004362">
    <property type="term" value="F:glutathione-disulfide reductase (NADPH) activity"/>
    <property type="evidence" value="ECO:0000314"/>
    <property type="project" value="SGD"/>
</dbReference>
<dbReference type="GO" id="GO:0005506">
    <property type="term" value="F:iron ion binding"/>
    <property type="evidence" value="ECO:0000314"/>
    <property type="project" value="SGD"/>
</dbReference>
<dbReference type="GO" id="GO:0034599">
    <property type="term" value="P:cellular response to oxidative stress"/>
    <property type="evidence" value="ECO:0000315"/>
    <property type="project" value="SGD"/>
</dbReference>
<dbReference type="GO" id="GO:0006879">
    <property type="term" value="P:intracellular iron ion homeostasis"/>
    <property type="evidence" value="ECO:0000303"/>
    <property type="project" value="ComplexPortal"/>
</dbReference>
<dbReference type="GO" id="GO:0016226">
    <property type="term" value="P:iron-sulfur cluster assembly"/>
    <property type="evidence" value="ECO:0000303"/>
    <property type="project" value="ComplexPortal"/>
</dbReference>
<dbReference type="CDD" id="cd03419">
    <property type="entry name" value="GRX_GRXh_1_2_like"/>
    <property type="match status" value="1"/>
</dbReference>
<dbReference type="FunFam" id="3.40.30.10:FF:000093">
    <property type="entry name" value="Glutaredoxin 2"/>
    <property type="match status" value="1"/>
</dbReference>
<dbReference type="Gene3D" id="3.40.30.10">
    <property type="entry name" value="Glutaredoxin"/>
    <property type="match status" value="1"/>
</dbReference>
<dbReference type="InterPro" id="IPR002109">
    <property type="entry name" value="Glutaredoxin"/>
</dbReference>
<dbReference type="InterPro" id="IPR011899">
    <property type="entry name" value="Glutaredoxin_euk/vir"/>
</dbReference>
<dbReference type="InterPro" id="IPR014025">
    <property type="entry name" value="Glutaredoxin_subgr"/>
</dbReference>
<dbReference type="InterPro" id="IPR036249">
    <property type="entry name" value="Thioredoxin-like_sf"/>
</dbReference>
<dbReference type="NCBIfam" id="TIGR02180">
    <property type="entry name" value="GRX_euk"/>
    <property type="match status" value="1"/>
</dbReference>
<dbReference type="PANTHER" id="PTHR45694">
    <property type="entry name" value="GLUTAREDOXIN 2"/>
    <property type="match status" value="1"/>
</dbReference>
<dbReference type="PANTHER" id="PTHR45694:SF5">
    <property type="entry name" value="GLUTAREDOXIN 2"/>
    <property type="match status" value="1"/>
</dbReference>
<dbReference type="Pfam" id="PF00462">
    <property type="entry name" value="Glutaredoxin"/>
    <property type="match status" value="1"/>
</dbReference>
<dbReference type="PRINTS" id="PR00160">
    <property type="entry name" value="GLUTAREDOXIN"/>
</dbReference>
<dbReference type="SUPFAM" id="SSF52833">
    <property type="entry name" value="Thioredoxin-like"/>
    <property type="match status" value="1"/>
</dbReference>
<dbReference type="PROSITE" id="PS51354">
    <property type="entry name" value="GLUTAREDOXIN_2"/>
    <property type="match status" value="1"/>
</dbReference>
<comment type="subcellular location">
    <subcellularLocation>
        <location evidence="3">Vacuole</location>
    </subcellularLocation>
</comment>
<comment type="miscellaneous">
    <text evidence="4">Present with 1643 molecules/cell in log phase SD medium.</text>
</comment>
<comment type="similarity">
    <text evidence="5">Belongs to the glutaredoxin family. Monothiol subfamily.</text>
</comment>
<accession>Q12438</accession>
<accession>D6VRX8</accession>
<name>GLRX6_YEAST</name>
<keyword id="KW-0001">2Fe-2S</keyword>
<keyword id="KW-0002">3D-structure</keyword>
<keyword id="KW-0903">Direct protein sequencing</keyword>
<keyword id="KW-0408">Iron</keyword>
<keyword id="KW-0411">Iron-sulfur</keyword>
<keyword id="KW-0479">Metal-binding</keyword>
<keyword id="KW-1185">Reference proteome</keyword>
<keyword id="KW-0732">Signal</keyword>
<keyword id="KW-0926">Vacuole</keyword>
<protein>
    <recommendedName>
        <fullName>Monothiol glutaredoxin-6</fullName>
    </recommendedName>
</protein>
<proteinExistence type="evidence at protein level"/>